<gene>
    <name evidence="1" type="primary">whiA</name>
    <name type="ordered locus">Cphy_0332</name>
</gene>
<reference key="1">
    <citation type="submission" date="2007-11" db="EMBL/GenBank/DDBJ databases">
        <title>Complete genome sequence of Clostridium phytofermentans ISDg.</title>
        <authorList>
            <person name="Leschine S.B."/>
            <person name="Warnick T.A."/>
            <person name="Blanchard J.L."/>
            <person name="Schnell D.J."/>
            <person name="Petit E.L."/>
            <person name="LaTouf W.G."/>
            <person name="Copeland A."/>
            <person name="Lucas S."/>
            <person name="Lapidus A."/>
            <person name="Barry K."/>
            <person name="Glavina del Rio T."/>
            <person name="Dalin E."/>
            <person name="Tice H."/>
            <person name="Pitluck S."/>
            <person name="Kiss H."/>
            <person name="Brettin T."/>
            <person name="Bruce D."/>
            <person name="Detter J.C."/>
            <person name="Han C."/>
            <person name="Kuske C."/>
            <person name="Schmutz J."/>
            <person name="Larimer F."/>
            <person name="Land M."/>
            <person name="Hauser L."/>
            <person name="Kyrpides N."/>
            <person name="Kim E.A."/>
            <person name="Richardson P."/>
        </authorList>
    </citation>
    <scope>NUCLEOTIDE SEQUENCE [LARGE SCALE GENOMIC DNA]</scope>
    <source>
        <strain>ATCC 700394 / DSM 18823 / ISDg</strain>
    </source>
</reference>
<dbReference type="EMBL" id="CP000885">
    <property type="protein sequence ID" value="ABX40719.1"/>
    <property type="molecule type" value="Genomic_DNA"/>
</dbReference>
<dbReference type="RefSeq" id="WP_012198362.1">
    <property type="nucleotide sequence ID" value="NC_010001.1"/>
</dbReference>
<dbReference type="SMR" id="A9KSS5"/>
<dbReference type="STRING" id="357809.Cphy_0332"/>
<dbReference type="KEGG" id="cpy:Cphy_0332"/>
<dbReference type="eggNOG" id="COG1481">
    <property type="taxonomic scope" value="Bacteria"/>
</dbReference>
<dbReference type="HOGENOM" id="CLU_053282_0_0_9"/>
<dbReference type="OrthoDB" id="401278at2"/>
<dbReference type="Proteomes" id="UP000000370">
    <property type="component" value="Chromosome"/>
</dbReference>
<dbReference type="GO" id="GO:0003677">
    <property type="term" value="F:DNA binding"/>
    <property type="evidence" value="ECO:0007669"/>
    <property type="project" value="UniProtKB-UniRule"/>
</dbReference>
<dbReference type="GO" id="GO:0051301">
    <property type="term" value="P:cell division"/>
    <property type="evidence" value="ECO:0007669"/>
    <property type="project" value="UniProtKB-UniRule"/>
</dbReference>
<dbReference type="GO" id="GO:0043937">
    <property type="term" value="P:regulation of sporulation"/>
    <property type="evidence" value="ECO:0007669"/>
    <property type="project" value="InterPro"/>
</dbReference>
<dbReference type="Gene3D" id="3.10.28.10">
    <property type="entry name" value="Homing endonucleases"/>
    <property type="match status" value="1"/>
</dbReference>
<dbReference type="HAMAP" id="MF_01420">
    <property type="entry name" value="HTH_type_WhiA"/>
    <property type="match status" value="1"/>
</dbReference>
<dbReference type="InterPro" id="IPR027434">
    <property type="entry name" value="Homing_endonucl"/>
</dbReference>
<dbReference type="InterPro" id="IPR018478">
    <property type="entry name" value="Sporu_reg_WhiA_N_dom"/>
</dbReference>
<dbReference type="InterPro" id="IPR003802">
    <property type="entry name" value="Sporulation_regulator_WhiA"/>
</dbReference>
<dbReference type="InterPro" id="IPR023054">
    <property type="entry name" value="Sporulation_regulator_WhiA_C"/>
</dbReference>
<dbReference type="InterPro" id="IPR039518">
    <property type="entry name" value="WhiA_LAGLIDADG_dom"/>
</dbReference>
<dbReference type="NCBIfam" id="TIGR00647">
    <property type="entry name" value="DNA_bind_WhiA"/>
    <property type="match status" value="1"/>
</dbReference>
<dbReference type="PANTHER" id="PTHR37307">
    <property type="entry name" value="CELL DIVISION PROTEIN WHIA-RELATED"/>
    <property type="match status" value="1"/>
</dbReference>
<dbReference type="PANTHER" id="PTHR37307:SF1">
    <property type="entry name" value="CELL DIVISION PROTEIN WHIA-RELATED"/>
    <property type="match status" value="1"/>
</dbReference>
<dbReference type="Pfam" id="PF02650">
    <property type="entry name" value="HTH_WhiA"/>
    <property type="match status" value="1"/>
</dbReference>
<dbReference type="Pfam" id="PF14527">
    <property type="entry name" value="LAGLIDADG_WhiA"/>
    <property type="match status" value="1"/>
</dbReference>
<dbReference type="Pfam" id="PF10298">
    <property type="entry name" value="WhiA_N"/>
    <property type="match status" value="1"/>
</dbReference>
<dbReference type="SUPFAM" id="SSF55608">
    <property type="entry name" value="Homing endonucleases"/>
    <property type="match status" value="1"/>
</dbReference>
<organism>
    <name type="scientific">Lachnoclostridium phytofermentans (strain ATCC 700394 / DSM 18823 / ISDg)</name>
    <name type="common">Clostridium phytofermentans</name>
    <dbReference type="NCBI Taxonomy" id="357809"/>
    <lineage>
        <taxon>Bacteria</taxon>
        <taxon>Bacillati</taxon>
        <taxon>Bacillota</taxon>
        <taxon>Clostridia</taxon>
        <taxon>Lachnospirales</taxon>
        <taxon>Lachnospiraceae</taxon>
    </lineage>
</organism>
<proteinExistence type="inferred from homology"/>
<evidence type="ECO:0000255" key="1">
    <source>
        <dbReference type="HAMAP-Rule" id="MF_01420"/>
    </source>
</evidence>
<feature type="chain" id="PRO_0000376469" description="Probable cell division protein WhiA">
    <location>
        <begin position="1"/>
        <end position="313"/>
    </location>
</feature>
<feature type="DNA-binding region" description="H-T-H motif" evidence="1">
    <location>
        <begin position="280"/>
        <end position="313"/>
    </location>
</feature>
<sequence>MSFSKEVKEEITKQMNNARHCRLAEIAALLSACGHVIQKDGEIKSIVLQTENILVARKYFTLLKKTFNINTEILIRKNKAGKNSLLFLLVVKLPKQVSLLYQATKLSLHHELGDKALVVDPIVVQNTCCKRAFVRGLFLAAGSMSDPEKTYHYEIVFPDLERASQLQEIINSFLIDAKIVLRKKYYVVYVKEGSQIVDLLNIMEAHTSLMDFENVRILKEMRNSINRQVNCEAANINKTVTAAAKQIDDILFIRDTIGFDNLTEGLEEIAELRISYPESSLKELGAMLNPPIGKSGVNHRLKKLCSIADGLRQ</sequence>
<name>WHIA_LACP7</name>
<keyword id="KW-0131">Cell cycle</keyword>
<keyword id="KW-0132">Cell division</keyword>
<keyword id="KW-0238">DNA-binding</keyword>
<keyword id="KW-1185">Reference proteome</keyword>
<protein>
    <recommendedName>
        <fullName evidence="1">Probable cell division protein WhiA</fullName>
    </recommendedName>
</protein>
<accession>A9KSS5</accession>
<comment type="function">
    <text evidence="1">Involved in cell division and chromosome segregation.</text>
</comment>
<comment type="similarity">
    <text evidence="1">Belongs to the WhiA family.</text>
</comment>